<protein>
    <recommendedName>
        <fullName evidence="1">Chaperone protein DnaK</fullName>
    </recommendedName>
    <alternativeName>
        <fullName evidence="1">HSP70</fullName>
    </alternativeName>
    <alternativeName>
        <fullName evidence="1">Heat shock 70 kDa protein</fullName>
    </alternativeName>
    <alternativeName>
        <fullName evidence="1">Heat shock protein 70</fullName>
    </alternativeName>
</protein>
<comment type="function">
    <text evidence="1">Acts as a chaperone.</text>
</comment>
<comment type="induction">
    <text evidence="1">By stress conditions e.g. heat shock.</text>
</comment>
<comment type="similarity">
    <text evidence="1">Belongs to the heat shock protein 70 family.</text>
</comment>
<proteinExistence type="inferred from homology"/>
<sequence length="649" mass="69733">MGKIIGIDLGTTNSCVAIMEGGKPKVIENSEGARTTPSVIAYQEDGEILVGAPAKRQAVTNPKNTLYAVKRLIGRKFDEKEVQKDIGMMPYQIVKADNGDAWISVRDKKLAPPQISAETLRKMKKTAEDYLGEEVTEAVITVPAYFNDAQRQATKDAGRIAGLDVKRIINEPTAAALAFGLDKTGKGDRKIAVYDLGGGTFDISIIEIADVDGEMQFEVLSTNGDTFLGGEDFDQRVIDYIIDEFKKINGLDLSKDAIALQRIKASAERAKIELSSSQQTEINEPYIAMANGAPVHLTMKITRAKLESLVEELISKTLAPLSIAIKDAGVKVSDIDDIILVGGMTRMPKVQEKVKEFFGKEPRKDVNPDEAVAVGAAIQGSVLSGDRKDLLLLDVTPLSLGIETLGGVMTKMIQKNTTIPTKFSQVFSTADDNQPAVTIKVFQGEREMAVGNKALGEFNLEGIPPSARGTPQIEVTFDIDANGILHVGAKDKATGKENKITIKANSGLTEEEIQKMVQDAEANAEEDKRLKEVAEAHNHGDALVHSTRKSLTEYGDKLEAGEKEKIEAAIKDLEEALKGSDKAAIDEKSAALSAAAQKLGEKMYADMQAQQAAGAAAGDAHAAGADGQADAKAQHDDVVDADFKEVKDK</sequence>
<reference key="1">
    <citation type="journal article" date="2007" name="PLoS Genet.">
        <title>A tale of two oxidation states: bacterial colonization of arsenic-rich environments.</title>
        <authorList>
            <person name="Muller D."/>
            <person name="Medigue C."/>
            <person name="Koechler S."/>
            <person name="Barbe V."/>
            <person name="Barakat M."/>
            <person name="Talla E."/>
            <person name="Bonnefoy V."/>
            <person name="Krin E."/>
            <person name="Arsene-Ploetze F."/>
            <person name="Carapito C."/>
            <person name="Chandler M."/>
            <person name="Cournoyer B."/>
            <person name="Cruveiller S."/>
            <person name="Dossat C."/>
            <person name="Duval S."/>
            <person name="Heymann M."/>
            <person name="Leize E."/>
            <person name="Lieutaud A."/>
            <person name="Lievremont D."/>
            <person name="Makita Y."/>
            <person name="Mangenot S."/>
            <person name="Nitschke W."/>
            <person name="Ortet P."/>
            <person name="Perdrial N."/>
            <person name="Schoepp B."/>
            <person name="Siguier P."/>
            <person name="Simeonova D.D."/>
            <person name="Rouy Z."/>
            <person name="Segurens B."/>
            <person name="Turlin E."/>
            <person name="Vallenet D."/>
            <person name="van Dorsselaer A."/>
            <person name="Weiss S."/>
            <person name="Weissenbach J."/>
            <person name="Lett M.-C."/>
            <person name="Danchin A."/>
            <person name="Bertin P.N."/>
        </authorList>
    </citation>
    <scope>NUCLEOTIDE SEQUENCE [LARGE SCALE GENOMIC DNA]</scope>
    <source>
        <strain>ULPAs1</strain>
    </source>
</reference>
<name>DNAK_HERAR</name>
<organism>
    <name type="scientific">Herminiimonas arsenicoxydans</name>
    <dbReference type="NCBI Taxonomy" id="204773"/>
    <lineage>
        <taxon>Bacteria</taxon>
        <taxon>Pseudomonadati</taxon>
        <taxon>Pseudomonadota</taxon>
        <taxon>Betaproteobacteria</taxon>
        <taxon>Burkholderiales</taxon>
        <taxon>Oxalobacteraceae</taxon>
        <taxon>Herminiimonas</taxon>
    </lineage>
</organism>
<dbReference type="EMBL" id="CU207211">
    <property type="protein sequence ID" value="CAL62769.1"/>
    <property type="molecule type" value="Genomic_DNA"/>
</dbReference>
<dbReference type="SMR" id="A4G8D2"/>
<dbReference type="STRING" id="204773.HEAR2647"/>
<dbReference type="KEGG" id="har:HEAR2647"/>
<dbReference type="eggNOG" id="COG0443">
    <property type="taxonomic scope" value="Bacteria"/>
</dbReference>
<dbReference type="HOGENOM" id="CLU_005965_2_1_4"/>
<dbReference type="OrthoDB" id="9766019at2"/>
<dbReference type="Proteomes" id="UP000006697">
    <property type="component" value="Chromosome"/>
</dbReference>
<dbReference type="GO" id="GO:0005524">
    <property type="term" value="F:ATP binding"/>
    <property type="evidence" value="ECO:0007669"/>
    <property type="project" value="UniProtKB-UniRule"/>
</dbReference>
<dbReference type="GO" id="GO:0140662">
    <property type="term" value="F:ATP-dependent protein folding chaperone"/>
    <property type="evidence" value="ECO:0007669"/>
    <property type="project" value="InterPro"/>
</dbReference>
<dbReference type="GO" id="GO:0051082">
    <property type="term" value="F:unfolded protein binding"/>
    <property type="evidence" value="ECO:0007669"/>
    <property type="project" value="InterPro"/>
</dbReference>
<dbReference type="CDD" id="cd10234">
    <property type="entry name" value="ASKHA_NBD_HSP70_DnaK-like"/>
    <property type="match status" value="1"/>
</dbReference>
<dbReference type="FunFam" id="2.60.34.10:FF:000014">
    <property type="entry name" value="Chaperone protein DnaK HSP70"/>
    <property type="match status" value="1"/>
</dbReference>
<dbReference type="FunFam" id="3.30.30.30:FF:000003">
    <property type="entry name" value="Heat shock protein 9"/>
    <property type="match status" value="1"/>
</dbReference>
<dbReference type="FunFam" id="1.20.1270.10:FF:000001">
    <property type="entry name" value="Molecular chaperone DnaK"/>
    <property type="match status" value="1"/>
</dbReference>
<dbReference type="FunFam" id="3.30.420.40:FF:000004">
    <property type="entry name" value="Molecular chaperone DnaK"/>
    <property type="match status" value="1"/>
</dbReference>
<dbReference type="FunFam" id="3.90.640.10:FF:000003">
    <property type="entry name" value="Molecular chaperone DnaK"/>
    <property type="match status" value="1"/>
</dbReference>
<dbReference type="Gene3D" id="1.20.1270.10">
    <property type="match status" value="1"/>
</dbReference>
<dbReference type="Gene3D" id="3.30.420.40">
    <property type="match status" value="2"/>
</dbReference>
<dbReference type="Gene3D" id="3.90.640.10">
    <property type="entry name" value="Actin, Chain A, domain 4"/>
    <property type="match status" value="1"/>
</dbReference>
<dbReference type="Gene3D" id="2.60.34.10">
    <property type="entry name" value="Substrate Binding Domain Of DNAk, Chain A, domain 1"/>
    <property type="match status" value="1"/>
</dbReference>
<dbReference type="HAMAP" id="MF_00332">
    <property type="entry name" value="DnaK"/>
    <property type="match status" value="1"/>
</dbReference>
<dbReference type="InterPro" id="IPR043129">
    <property type="entry name" value="ATPase_NBD"/>
</dbReference>
<dbReference type="InterPro" id="IPR012725">
    <property type="entry name" value="Chaperone_DnaK"/>
</dbReference>
<dbReference type="InterPro" id="IPR018181">
    <property type="entry name" value="Heat_shock_70_CS"/>
</dbReference>
<dbReference type="InterPro" id="IPR029048">
    <property type="entry name" value="HSP70_C_sf"/>
</dbReference>
<dbReference type="InterPro" id="IPR029047">
    <property type="entry name" value="HSP70_peptide-bd_sf"/>
</dbReference>
<dbReference type="InterPro" id="IPR013126">
    <property type="entry name" value="Hsp_70_fam"/>
</dbReference>
<dbReference type="NCBIfam" id="NF001413">
    <property type="entry name" value="PRK00290.1"/>
    <property type="match status" value="1"/>
</dbReference>
<dbReference type="NCBIfam" id="NF003520">
    <property type="entry name" value="PRK05183.1"/>
    <property type="match status" value="1"/>
</dbReference>
<dbReference type="NCBIfam" id="TIGR02350">
    <property type="entry name" value="prok_dnaK"/>
    <property type="match status" value="1"/>
</dbReference>
<dbReference type="PANTHER" id="PTHR19375">
    <property type="entry name" value="HEAT SHOCK PROTEIN 70KDA"/>
    <property type="match status" value="1"/>
</dbReference>
<dbReference type="Pfam" id="PF00012">
    <property type="entry name" value="HSP70"/>
    <property type="match status" value="1"/>
</dbReference>
<dbReference type="PRINTS" id="PR00301">
    <property type="entry name" value="HEATSHOCK70"/>
</dbReference>
<dbReference type="SUPFAM" id="SSF53067">
    <property type="entry name" value="Actin-like ATPase domain"/>
    <property type="match status" value="2"/>
</dbReference>
<dbReference type="SUPFAM" id="SSF100934">
    <property type="entry name" value="Heat shock protein 70kD (HSP70), C-terminal subdomain"/>
    <property type="match status" value="1"/>
</dbReference>
<dbReference type="SUPFAM" id="SSF100920">
    <property type="entry name" value="Heat shock protein 70kD (HSP70), peptide-binding domain"/>
    <property type="match status" value="1"/>
</dbReference>
<dbReference type="PROSITE" id="PS00297">
    <property type="entry name" value="HSP70_1"/>
    <property type="match status" value="1"/>
</dbReference>
<dbReference type="PROSITE" id="PS00329">
    <property type="entry name" value="HSP70_2"/>
    <property type="match status" value="1"/>
</dbReference>
<dbReference type="PROSITE" id="PS01036">
    <property type="entry name" value="HSP70_3"/>
    <property type="match status" value="1"/>
</dbReference>
<feature type="chain" id="PRO_1000059579" description="Chaperone protein DnaK">
    <location>
        <begin position="1"/>
        <end position="649"/>
    </location>
</feature>
<feature type="region of interest" description="Disordered" evidence="2">
    <location>
        <begin position="608"/>
        <end position="649"/>
    </location>
</feature>
<feature type="compositionally biased region" description="Low complexity" evidence="2">
    <location>
        <begin position="608"/>
        <end position="631"/>
    </location>
</feature>
<feature type="compositionally biased region" description="Basic and acidic residues" evidence="2">
    <location>
        <begin position="632"/>
        <end position="649"/>
    </location>
</feature>
<feature type="modified residue" description="Phosphothreonine; by autocatalysis" evidence="1">
    <location>
        <position position="200"/>
    </location>
</feature>
<accession>A4G8D2</accession>
<gene>
    <name evidence="1" type="primary">dnaK</name>
    <name type="ordered locus">HEAR2647</name>
</gene>
<keyword id="KW-0067">ATP-binding</keyword>
<keyword id="KW-0143">Chaperone</keyword>
<keyword id="KW-0547">Nucleotide-binding</keyword>
<keyword id="KW-0597">Phosphoprotein</keyword>
<keyword id="KW-1185">Reference proteome</keyword>
<keyword id="KW-0346">Stress response</keyword>
<evidence type="ECO:0000255" key="1">
    <source>
        <dbReference type="HAMAP-Rule" id="MF_00332"/>
    </source>
</evidence>
<evidence type="ECO:0000256" key="2">
    <source>
        <dbReference type="SAM" id="MobiDB-lite"/>
    </source>
</evidence>